<comment type="function">
    <text evidence="1 5 6 7 9">Plays a critical role in the regulation of enzymes involved in nucleotide cycle in photoreceptors (PubMed:21078983, PubMed:27471269). Inhibits the basal catalytic activity and the GCAP-stimulated activity of GUCY2E and GUCY2F, two retinal guanylyl cyclases involved in the production of cGMP in photoreceptors (PubMed:27471269). Involved in the transport of GUCY2E and GUCY2F to their target sites in the photoreceptor outer segment (PubMed:21078983). Up-regulates the activity of GUK1, a kinase that also plays an essential role for recycling GMP and indirectly, cGMP (By similarity). Plays an important role for the survival of rods and cones in the retina (PubMed:17186464, PubMed:8486383).</text>
</comment>
<comment type="subunit">
    <text evidence="1 6">Monomer (By similarity). Interacts with GUCY2E; promotes the exit of GUCY2E from the endoplasmic reticulum and its trafficking to the photoreceptor outer segments (PubMed:21078983). The interaction with GUCY2E negatively regulates its activity (By similarity). Interacts with GUCY2F; promotes the exit of GUCY2F from the endoplasmic reticulum and its trafficking to the photoreceptor outer segments (PubMed:21078983). The interaction with GUCY2F negatively regulates its activity (By similarity). Interacts with GUK1; up-regulates GUK1 activity (By similarity).</text>
</comment>
<comment type="subcellular location">
    <subcellularLocation>
        <location evidence="6 8">Cell projection</location>
        <location evidence="6 8">Cilium</location>
        <location evidence="6 8">Photoreceptor outer segment</location>
    </subcellularLocation>
    <subcellularLocation>
        <location evidence="6 8">Photoreceptor inner segment</location>
    </subcellularLocation>
    <subcellularLocation>
        <location evidence="6">Endosome</location>
    </subcellularLocation>
    <subcellularLocation>
        <location evidence="5">Nucleus</location>
    </subcellularLocation>
    <subcellularLocation>
        <location evidence="1">Cytoplasm</location>
    </subcellularLocation>
    <subcellularLocation>
        <location evidence="1">Cytoplasm</location>
        <location evidence="1">Perinuclear region</location>
    </subcellularLocation>
    <text evidence="1 8">Colocalizes with GUCY2E and GUCY2F in rods and cones photoreceptors. Colocalizes with GUK1 in photoreceptor inner segments and to a lesser extent in the outer plexiform layer (PubMed:29515371). Strong dot-like perinuclear staining in the epithelial cells (By similarity).</text>
</comment>
<comment type="tissue specificity">
    <text evidence="4 5 6 8">Expressed in the retina and in particular in the inner nuclear layer, in rod and cone outer segments, in the outer nuclear layer, in the outer plexiform layer and in the ganglion cell layer.</text>
</comment>
<comment type="disease">
    <text evidence="5 9">A spontaneous mutation leading to a frameshift and in an unstable truncated protein lacking the C-terminal 89 amino acids causes retinal degeneration. Homozygotes mice (called rd-3) display retinal degeneration, beginning at 3 weeks of age, characterized by complete loss of photoreceptor rod cells by 5 weeks, and cones by 8 weeks.</text>
</comment>
<comment type="sequence caution" evidence="10">
    <conflict type="frameshift">
        <sequence resource="EMBL-CDS" id="BAA92758"/>
    </conflict>
</comment>
<comment type="sequence caution" evidence="10">
    <conflict type="erroneous initiation">
        <sequence resource="EMBL-CDS" id="BAB29312"/>
    </conflict>
</comment>
<keyword id="KW-0966">Cell projection</keyword>
<keyword id="KW-0175">Coiled coil</keyword>
<keyword id="KW-0963">Cytoplasm</keyword>
<keyword id="KW-0967">Endosome</keyword>
<keyword id="KW-0539">Nucleus</keyword>
<keyword id="KW-1185">Reference proteome</keyword>
<keyword id="KW-0716">Sensory transduction</keyword>
<keyword id="KW-0844">Vision</keyword>
<reference key="1">
    <citation type="journal article" date="2000" name="Biochem. Biophys. Res. Commun.">
        <title>Growth suppression of Escherichia coli by induction of expression of mammalian genes with transmembrane or ATPase domains.</title>
        <authorList>
            <person name="Inoue S."/>
            <person name="Sano H."/>
            <person name="Ohta M."/>
        </authorList>
    </citation>
    <scope>NUCLEOTIDE SEQUENCE [MRNA]</scope>
    <source>
        <tissue>Brain</tissue>
    </source>
</reference>
<reference key="2">
    <citation type="submission" date="2001-07" db="EMBL/GenBank/DDBJ databases">
        <authorList>
            <person name="Adachi J."/>
            <person name="Aizawa K."/>
            <person name="Akimura T."/>
            <person name="Arakawa T."/>
            <person name="Bono H."/>
            <person name="Carninci P."/>
            <person name="Fukuda S."/>
            <person name="Furuno M."/>
            <person name="Hanagaki T."/>
            <person name="Hara A."/>
            <person name="Hashizume W."/>
            <person name="Hayashida K."/>
            <person name="Hayatsu N."/>
            <person name="Hiramoto K."/>
            <person name="Hiraoka T."/>
            <person name="Hirozane T."/>
            <person name="Hori F."/>
            <person name="Imotani K."/>
            <person name="Ishii Y."/>
            <person name="Itoh M."/>
            <person name="Kagawa I."/>
            <person name="Kasukawa T."/>
            <person name="Katoh H."/>
            <person name="Kawai J."/>
            <person name="Kojima Y."/>
            <person name="Kondo S."/>
            <person name="Konno H."/>
            <person name="Kouda M."/>
            <person name="Koya S."/>
            <person name="Kurihara C."/>
            <person name="Matsuyama T."/>
            <person name="Miyazaki A."/>
            <person name="Murata M."/>
            <person name="Nakamura M."/>
            <person name="Nishi K."/>
            <person name="Nomura K."/>
            <person name="Numazaki R."/>
            <person name="Ohno M."/>
            <person name="Ohsato N."/>
            <person name="Okazaki Y."/>
            <person name="Saito R."/>
            <person name="Saitoh H."/>
            <person name="Sakai C."/>
            <person name="Sakai K."/>
            <person name="Sakazume N."/>
            <person name="Sano H."/>
            <person name="Sasaki D."/>
            <person name="Shibata K."/>
            <person name="Shinagawa A."/>
            <person name="Shiraki T."/>
            <person name="Sogabe Y."/>
            <person name="Tagami M."/>
            <person name="Tagawa A."/>
            <person name="Takahashi F."/>
            <person name="Takaku-Akahira S."/>
            <person name="Takeda Y."/>
            <person name="Tanaka T."/>
            <person name="Tomaru A."/>
            <person name="Toya T."/>
            <person name="Yasunishi A."/>
            <person name="Muramatsu M."/>
            <person name="Hayashizaki Y."/>
        </authorList>
    </citation>
    <scope>NUCLEOTIDE SEQUENCE [LARGE SCALE MRNA]</scope>
    <source>
        <strain>C57BL/6J</strain>
        <tissue>Head</tissue>
    </source>
</reference>
<reference key="3">
    <citation type="journal article" date="2004" name="Genome Res.">
        <title>The status, quality, and expansion of the NIH full-length cDNA project: the Mammalian Gene Collection (MGC).</title>
        <authorList>
            <consortium name="The MGC Project Team"/>
        </authorList>
    </citation>
    <scope>NUCLEOTIDE SEQUENCE [LARGE SCALE MRNA]</scope>
    <source>
        <tissue>Brain</tissue>
        <tissue>Eye</tissue>
    </source>
</reference>
<reference key="4">
    <citation type="journal article" date="1993" name="Genomics">
        <title>New mouse primary retinal degeneration (rd-3).</title>
        <authorList>
            <person name="Chang B."/>
            <person name="Heckenlively J.R."/>
            <person name="Hawes N.L."/>
            <person name="Roderick T.H."/>
        </authorList>
    </citation>
    <scope>DISEASE</scope>
    <scope>FUNCTION</scope>
</reference>
<reference key="5">
    <citation type="journal article" date="2003" name="Biochem. Biophys. Res. Commun.">
        <title>Identification and characterization of C1orf36, a transcript highly expressed in photoreceptor cells, and mutation analysis in retinitis pigmentosa.</title>
        <authorList>
            <person name="Lavorgna G."/>
            <person name="Lestingi M."/>
            <person name="Ziviello C."/>
            <person name="Testa F."/>
            <person name="Simonelli F."/>
            <person name="Manitto M.P."/>
            <person name="Brancato R."/>
            <person name="Ferrari M."/>
            <person name="Rinaldi E."/>
            <person name="Ciccodicola A."/>
            <person name="Banfi S."/>
        </authorList>
    </citation>
    <scope>TISSUE SPECIFICITY</scope>
</reference>
<reference key="6">
    <citation type="journal article" date="2006" name="Am. J. Hum. Genet.">
        <title>Premature truncation of a novel protein, RD3, exhibiting subnuclear localization is associated with retinal degeneration.</title>
        <authorList>
            <person name="Friedman J.S."/>
            <person name="Chang B."/>
            <person name="Kannabiran C."/>
            <person name="Chakarova C."/>
            <person name="Singh H.P."/>
            <person name="Jalali S."/>
            <person name="Hawes N.L."/>
            <person name="Branham K."/>
            <person name="Othman M."/>
            <person name="Filippova E."/>
            <person name="Thompson D.A."/>
            <person name="Webster A.R."/>
            <person name="Andreasson S."/>
            <person name="Jacobson S.G."/>
            <person name="Bhattacharya S.S."/>
            <person name="Heckenlively J.R."/>
            <person name="Swaroop A."/>
        </authorList>
    </citation>
    <scope>DISEASE</scope>
    <scope>TISSUE SPECIFICITY</scope>
    <scope>FUNCTION</scope>
</reference>
<reference key="7">
    <citation type="journal article" date="2010" name="Proc. Natl. Acad. Sci. U.S.A.">
        <title>RD3, the protein associated with Leber congenital amaurosis type 12, is required for guanylate cyclase trafficking in photoreceptor cells.</title>
        <authorList>
            <person name="Azadi S."/>
            <person name="Molday L.L."/>
            <person name="Molday R.S."/>
        </authorList>
    </citation>
    <scope>TISSUE SPECIFICITY</scope>
    <scope>SUBCELLULAR LOCATION</scope>
    <scope>INTERACTION WITH GUCY2E AND GUCY2F</scope>
    <scope>FUNCTION</scope>
</reference>
<reference key="8">
    <citation type="journal article" date="2016" name="J. Biol. Chem.">
        <title>Functional Study and Mapping Sites for Interaction with the Target Enzyme in Retinal Degeneration 3 (RD3) Protein.</title>
        <authorList>
            <person name="Peshenko I.V."/>
            <person name="Olshevskaya E.V."/>
            <person name="Dizhoor A.M."/>
        </authorList>
    </citation>
    <scope>FUNCTION</scope>
    <scope>INTERACTION WITH GUCY2E</scope>
</reference>
<reference key="9">
    <citation type="journal article" date="2018" name="Front. Mol. Neurosci.">
        <title>Control of the Nucleotide Cycle in Photoreceptor Cell Extracts by Retinal Degeneration Protein 3.</title>
        <authorList>
            <person name="Wimberg H."/>
            <person name="Janssen-Bienhold U."/>
            <person name="Koch K.W."/>
        </authorList>
    </citation>
    <scope>TISSUE SPECIFICITY</scope>
    <scope>SUBCELLULAR LOCATION</scope>
</reference>
<accession>Q8BRE0</accession>
<accession>Q3SYJ8</accession>
<accession>Q9CRS3</accession>
<accession>Q9JMF2</accession>
<organism>
    <name type="scientific">Mus musculus</name>
    <name type="common">Mouse</name>
    <dbReference type="NCBI Taxonomy" id="10090"/>
    <lineage>
        <taxon>Eukaryota</taxon>
        <taxon>Metazoa</taxon>
        <taxon>Chordata</taxon>
        <taxon>Craniata</taxon>
        <taxon>Vertebrata</taxon>
        <taxon>Euteleostomi</taxon>
        <taxon>Mammalia</taxon>
        <taxon>Eutheria</taxon>
        <taxon>Euarchontoglires</taxon>
        <taxon>Glires</taxon>
        <taxon>Rodentia</taxon>
        <taxon>Myomorpha</taxon>
        <taxon>Muroidea</taxon>
        <taxon>Muridae</taxon>
        <taxon>Murinae</taxon>
        <taxon>Mus</taxon>
        <taxon>Mus</taxon>
    </lineage>
</organism>
<name>RD3_MOUSE</name>
<sequence>MSLIPWLRWNDTPPRLSARTPAEMVLETLMMELAGQMREVERQQRERRSAVRKICTGVDYSWLANTPRPTYDISPGERLQLEDVCAKIHPSYCGPAILRFRQLLAEREPEVQEVARLFRSVLQEALEKMKQEEEAHKLTRQWSLRPRGSLSSFKTRARIAPFASDIRTISEDVERDAPPPPRTWSMPEFRAPQAD</sequence>
<proteinExistence type="evidence at protein level"/>
<gene>
    <name type="primary">Rd3</name>
</gene>
<feature type="chain" id="PRO_0000089249" description="Protein RD3">
    <location>
        <begin position="1"/>
        <end position="195"/>
    </location>
</feature>
<feature type="region of interest" description="Disordered" evidence="3">
    <location>
        <begin position="168"/>
        <end position="195"/>
    </location>
</feature>
<feature type="coiled-coil region" evidence="2">
    <location>
        <begin position="22"/>
        <end position="54"/>
    </location>
</feature>
<feature type="compositionally biased region" description="Basic and acidic residues" evidence="3">
    <location>
        <begin position="168"/>
        <end position="177"/>
    </location>
</feature>
<dbReference type="EMBL" id="AB030195">
    <property type="protein sequence ID" value="BAA92758.1"/>
    <property type="status" value="ALT_FRAME"/>
    <property type="molecule type" value="mRNA"/>
</dbReference>
<dbReference type="EMBL" id="AK014383">
    <property type="protein sequence ID" value="BAB29312.2"/>
    <property type="status" value="ALT_INIT"/>
    <property type="molecule type" value="mRNA"/>
</dbReference>
<dbReference type="EMBL" id="AK045045">
    <property type="protein sequence ID" value="BAC32196.1"/>
    <property type="molecule type" value="mRNA"/>
</dbReference>
<dbReference type="EMBL" id="BC103778">
    <property type="protein sequence ID" value="AAI03779.1"/>
    <property type="molecule type" value="mRNA"/>
</dbReference>
<dbReference type="EMBL" id="BC116935">
    <property type="protein sequence ID" value="AAI16936.1"/>
    <property type="molecule type" value="mRNA"/>
</dbReference>
<dbReference type="EMBL" id="BC116937">
    <property type="protein sequence ID" value="AAI16938.1"/>
    <property type="molecule type" value="mRNA"/>
</dbReference>
<dbReference type="CCDS" id="CCDS15626.3"/>
<dbReference type="RefSeq" id="NP_001171371.2">
    <property type="nucleotide sequence ID" value="NM_001177900.2"/>
</dbReference>
<dbReference type="RefSeq" id="NP_001290061.1">
    <property type="nucleotide sequence ID" value="NM_001303132.1"/>
</dbReference>
<dbReference type="RefSeq" id="NP_001415815.1">
    <property type="nucleotide sequence ID" value="NM_001428886.1"/>
</dbReference>
<dbReference type="RefSeq" id="NP_001415816.1">
    <property type="nucleotide sequence ID" value="NM_001428887.1"/>
</dbReference>
<dbReference type="RefSeq" id="NP_001415817.1">
    <property type="nucleotide sequence ID" value="NM_001428888.1"/>
</dbReference>
<dbReference type="RefSeq" id="NP_001415818.1">
    <property type="nucleotide sequence ID" value="NM_001428889.1"/>
</dbReference>
<dbReference type="RefSeq" id="NP_076216.3">
    <property type="nucleotide sequence ID" value="NM_023727.5"/>
</dbReference>
<dbReference type="RefSeq" id="XP_006497268.1">
    <property type="nucleotide sequence ID" value="XM_006497205.2"/>
</dbReference>
<dbReference type="RefSeq" id="XP_006497269.1">
    <property type="nucleotide sequence ID" value="XM_006497206.5"/>
</dbReference>
<dbReference type="RefSeq" id="XP_036009770.1">
    <property type="nucleotide sequence ID" value="XM_036153877.1"/>
</dbReference>
<dbReference type="SMR" id="Q8BRE0"/>
<dbReference type="FunCoup" id="Q8BRE0">
    <property type="interactions" value="110"/>
</dbReference>
<dbReference type="IntAct" id="Q8BRE0">
    <property type="interactions" value="46"/>
</dbReference>
<dbReference type="STRING" id="10090.ENSMUSP00000138049"/>
<dbReference type="PhosphoSitePlus" id="Q8BRE0"/>
<dbReference type="PaxDb" id="10090-ENSMUSP00000050188"/>
<dbReference type="Antibodypedia" id="47112">
    <property type="antibodies" value="66 antibodies from 17 providers"/>
</dbReference>
<dbReference type="Ensembl" id="ENSMUST00000180463.3">
    <property type="protein sequence ID" value="ENSMUSP00000138049.2"/>
    <property type="gene ID" value="ENSMUSG00000049353.18"/>
</dbReference>
<dbReference type="GeneID" id="74023"/>
<dbReference type="KEGG" id="mmu:74023"/>
<dbReference type="UCSC" id="uc007edd.3">
    <property type="organism name" value="mouse"/>
</dbReference>
<dbReference type="AGR" id="MGI:1921273"/>
<dbReference type="CTD" id="343035"/>
<dbReference type="MGI" id="MGI:1921273">
    <property type="gene designation" value="Rd3"/>
</dbReference>
<dbReference type="VEuPathDB" id="HostDB:ENSMUSG00000049353"/>
<dbReference type="eggNOG" id="ENOG502QTP1">
    <property type="taxonomic scope" value="Eukaryota"/>
</dbReference>
<dbReference type="GeneTree" id="ENSGT00390000002089"/>
<dbReference type="HOGENOM" id="CLU_107621_0_0_1"/>
<dbReference type="InParanoid" id="Q8BRE0"/>
<dbReference type="OMA" id="MNFRSRI"/>
<dbReference type="OrthoDB" id="10072259at2759"/>
<dbReference type="PhylomeDB" id="Q8BRE0"/>
<dbReference type="BioGRID-ORCS" id="74023">
    <property type="hits" value="1 hit in 57 CRISPR screens"/>
</dbReference>
<dbReference type="ChiTaRS" id="Rd3">
    <property type="organism name" value="mouse"/>
</dbReference>
<dbReference type="PRO" id="PR:Q8BRE0"/>
<dbReference type="Proteomes" id="UP000000589">
    <property type="component" value="Chromosome 1"/>
</dbReference>
<dbReference type="RNAct" id="Q8BRE0">
    <property type="molecule type" value="protein"/>
</dbReference>
<dbReference type="Bgee" id="ENSMUSG00000049353">
    <property type="expression patterns" value="Expressed in layer of retina and 38 other cell types or tissues"/>
</dbReference>
<dbReference type="ExpressionAtlas" id="Q8BRE0">
    <property type="expression patterns" value="baseline and differential"/>
</dbReference>
<dbReference type="GO" id="GO:0120199">
    <property type="term" value="C:cone photoreceptor outer segment"/>
    <property type="evidence" value="ECO:0000314"/>
    <property type="project" value="UniProtKB"/>
</dbReference>
<dbReference type="GO" id="GO:0005737">
    <property type="term" value="C:cytoplasm"/>
    <property type="evidence" value="ECO:0000250"/>
    <property type="project" value="UniProtKB"/>
</dbReference>
<dbReference type="GO" id="GO:0005768">
    <property type="term" value="C:endosome"/>
    <property type="evidence" value="ECO:0007669"/>
    <property type="project" value="UniProtKB-SubCell"/>
</dbReference>
<dbReference type="GO" id="GO:0005634">
    <property type="term" value="C:nucleus"/>
    <property type="evidence" value="ECO:0000314"/>
    <property type="project" value="UniProtKB"/>
</dbReference>
<dbReference type="GO" id="GO:0048471">
    <property type="term" value="C:perinuclear region of cytoplasm"/>
    <property type="evidence" value="ECO:0000250"/>
    <property type="project" value="UniProtKB"/>
</dbReference>
<dbReference type="GO" id="GO:0001917">
    <property type="term" value="C:photoreceptor inner segment"/>
    <property type="evidence" value="ECO:0000314"/>
    <property type="project" value="UniProtKB"/>
</dbReference>
<dbReference type="GO" id="GO:0001750">
    <property type="term" value="C:photoreceptor outer segment"/>
    <property type="evidence" value="ECO:0000314"/>
    <property type="project" value="UniProtKB"/>
</dbReference>
<dbReference type="GO" id="GO:0120200">
    <property type="term" value="C:rod photoreceptor outer segment"/>
    <property type="evidence" value="ECO:0000314"/>
    <property type="project" value="UniProtKB"/>
</dbReference>
<dbReference type="GO" id="GO:0031283">
    <property type="term" value="P:negative regulation of guanylate cyclase activity"/>
    <property type="evidence" value="ECO:0000315"/>
    <property type="project" value="UniProtKB"/>
</dbReference>
<dbReference type="GO" id="GO:0015031">
    <property type="term" value="P:protein transport"/>
    <property type="evidence" value="ECO:0007669"/>
    <property type="project" value="Ensembl"/>
</dbReference>
<dbReference type="GO" id="GO:0060041">
    <property type="term" value="P:retina development in camera-type eye"/>
    <property type="evidence" value="ECO:0000315"/>
    <property type="project" value="UniProtKB"/>
</dbReference>
<dbReference type="GO" id="GO:0007601">
    <property type="term" value="P:visual perception"/>
    <property type="evidence" value="ECO:0000315"/>
    <property type="project" value="UniProtKB"/>
</dbReference>
<dbReference type="InterPro" id="IPR028092">
    <property type="entry name" value="RD3"/>
</dbReference>
<dbReference type="PANTHER" id="PTHR28489:SF1">
    <property type="entry name" value="PROTEIN RD3"/>
    <property type="match status" value="1"/>
</dbReference>
<dbReference type="PANTHER" id="PTHR28489">
    <property type="entry name" value="RENTINAL DEGENERATION 3-LIKE"/>
    <property type="match status" value="1"/>
</dbReference>
<dbReference type="Pfam" id="PF14473">
    <property type="entry name" value="RD3"/>
    <property type="match status" value="1"/>
</dbReference>
<protein>
    <recommendedName>
        <fullName>Protein RD3</fullName>
    </recommendedName>
    <alternativeName>
        <fullName>Retinal degeneration protein 3</fullName>
    </alternativeName>
</protein>
<evidence type="ECO:0000250" key="1">
    <source>
        <dbReference type="UniProtKB" id="Q7Z3Z2"/>
    </source>
</evidence>
<evidence type="ECO:0000255" key="2"/>
<evidence type="ECO:0000256" key="3">
    <source>
        <dbReference type="SAM" id="MobiDB-lite"/>
    </source>
</evidence>
<evidence type="ECO:0000269" key="4">
    <source>
    </source>
</evidence>
<evidence type="ECO:0000269" key="5">
    <source>
    </source>
</evidence>
<evidence type="ECO:0000269" key="6">
    <source>
    </source>
</evidence>
<evidence type="ECO:0000269" key="7">
    <source>
    </source>
</evidence>
<evidence type="ECO:0000269" key="8">
    <source>
    </source>
</evidence>
<evidence type="ECO:0000269" key="9">
    <source>
    </source>
</evidence>
<evidence type="ECO:0000305" key="10"/>